<reference key="1">
    <citation type="journal article" date="1996" name="Nucleic Acids Res.">
        <title>Complete sequence analysis of the genome of the bacterium Mycoplasma pneumoniae.</title>
        <authorList>
            <person name="Himmelreich R."/>
            <person name="Hilbert H."/>
            <person name="Plagens H."/>
            <person name="Pirkl E."/>
            <person name="Li B.-C."/>
            <person name="Herrmann R."/>
        </authorList>
    </citation>
    <scope>NUCLEOTIDE SEQUENCE [LARGE SCALE GENOMIC DNA]</scope>
    <source>
        <strain>ATCC 29342 / M129 / Subtype 1</strain>
    </source>
</reference>
<gene>
    <name type="ordered locus">MPN_387</name>
    <name type="ORF">F11_orf358b</name>
    <name type="ORF">MP450</name>
</gene>
<sequence length="358" mass="42617">MTNFEYYRDFDDFQRRETINFFLSKFPLASQKQLQDFLEQARQAYVQLRQTNPAHLDWNQTLLYLAQKFLPEKQSEKDRLKKILVLQEQLKVRYEGEIKRQSQQNSELLIQLGQRDEEIIQMQQLFKEKERQLEVYQKQLNEAKEYNHKLEEHYNKTLEEALKEYEQQCTDAIHRRDEEIQAIFTSKLNEKNSEITQLQTYLQSAVDENEALQKQHKLVLFKNQKYEKMVSDLQVDLARIQEINNSLTSEKRDFQRANNDLVKQYNKLKNRLEQKLGEITNAQVNGQTHTVSLADTSQQFHRPQEAVIPQTQVISYTLDDMDDDMEVEETPPTTNKDLPRGATQPKRNSIKRVSKLID</sequence>
<dbReference type="EMBL" id="U00089">
    <property type="protein sequence ID" value="AAB96098.1"/>
    <property type="molecule type" value="Genomic_DNA"/>
</dbReference>
<dbReference type="PIR" id="S73776">
    <property type="entry name" value="S73776"/>
</dbReference>
<dbReference type="RefSeq" id="NP_110075.1">
    <property type="nucleotide sequence ID" value="NC_000912.1"/>
</dbReference>
<dbReference type="RefSeq" id="WP_010874743.1">
    <property type="nucleotide sequence ID" value="NZ_OU342337.1"/>
</dbReference>
<dbReference type="SMR" id="P75395"/>
<dbReference type="IntAct" id="P75395">
    <property type="interactions" value="1"/>
</dbReference>
<dbReference type="STRING" id="272634.MPN_387"/>
<dbReference type="EnsemblBacteria" id="AAB96098">
    <property type="protein sequence ID" value="AAB96098"/>
    <property type="gene ID" value="MPN_387"/>
</dbReference>
<dbReference type="KEGG" id="mpn:MPN_387"/>
<dbReference type="PATRIC" id="fig|272634.6.peg.418"/>
<dbReference type="HOGENOM" id="CLU_815895_0_0_14"/>
<dbReference type="OrthoDB" id="9978147at2"/>
<dbReference type="BioCyc" id="MPNE272634:G1GJ3-615-MONOMER"/>
<dbReference type="Proteomes" id="UP000000808">
    <property type="component" value="Chromosome"/>
</dbReference>
<evidence type="ECO:0000256" key="1">
    <source>
        <dbReference type="SAM" id="MobiDB-lite"/>
    </source>
</evidence>
<proteinExistence type="predicted"/>
<accession>P75395</accession>
<protein>
    <recommendedName>
        <fullName>Uncharacterized protein MG269 homolog</fullName>
    </recommendedName>
</protein>
<organism>
    <name type="scientific">Mycoplasma pneumoniae (strain ATCC 29342 / M129 / Subtype 1)</name>
    <name type="common">Mycoplasmoides pneumoniae</name>
    <dbReference type="NCBI Taxonomy" id="272634"/>
    <lineage>
        <taxon>Bacteria</taxon>
        <taxon>Bacillati</taxon>
        <taxon>Mycoplasmatota</taxon>
        <taxon>Mycoplasmoidales</taxon>
        <taxon>Mycoplasmoidaceae</taxon>
        <taxon>Mycoplasmoides</taxon>
    </lineage>
</organism>
<name>Y387_MYCPN</name>
<feature type="chain" id="PRO_0000210499" description="Uncharacterized protein MG269 homolog">
    <location>
        <begin position="1"/>
        <end position="358"/>
    </location>
</feature>
<feature type="region of interest" description="Disordered" evidence="1">
    <location>
        <begin position="324"/>
        <end position="358"/>
    </location>
</feature>
<feature type="compositionally biased region" description="Basic residues" evidence="1">
    <location>
        <begin position="348"/>
        <end position="358"/>
    </location>
</feature>
<keyword id="KW-1185">Reference proteome</keyword>